<proteinExistence type="evidence at transcript level"/>
<dbReference type="EMBL" id="X60257">
    <property type="protein sequence ID" value="CAA42809.1"/>
    <property type="molecule type" value="mRNA"/>
</dbReference>
<dbReference type="PIR" id="JH0536">
    <property type="entry name" value="JH0536"/>
</dbReference>
<dbReference type="SMR" id="P30377"/>
<dbReference type="FunCoup" id="P30377">
    <property type="interactions" value="815"/>
</dbReference>
<dbReference type="InParanoid" id="P30377"/>
<dbReference type="Proteomes" id="UP000001519">
    <property type="component" value="Unplaced"/>
</dbReference>
<dbReference type="GO" id="GO:0031901">
    <property type="term" value="C:early endosome membrane"/>
    <property type="evidence" value="ECO:0007669"/>
    <property type="project" value="UniProtKB-ARBA"/>
</dbReference>
<dbReference type="GO" id="GO:0012507">
    <property type="term" value="C:ER to Golgi transport vesicle membrane"/>
    <property type="evidence" value="ECO:0007669"/>
    <property type="project" value="UniProtKB-ARBA"/>
</dbReference>
<dbReference type="GO" id="GO:0009897">
    <property type="term" value="C:external side of plasma membrane"/>
    <property type="evidence" value="ECO:0000318"/>
    <property type="project" value="GO_Central"/>
</dbReference>
<dbReference type="GO" id="GO:0005615">
    <property type="term" value="C:extracellular space"/>
    <property type="evidence" value="ECO:0000318"/>
    <property type="project" value="GO_Central"/>
</dbReference>
<dbReference type="GO" id="GO:0098553">
    <property type="term" value="C:lumenal side of endoplasmic reticulum membrane"/>
    <property type="evidence" value="ECO:0007669"/>
    <property type="project" value="UniProtKB-ARBA"/>
</dbReference>
<dbReference type="GO" id="GO:0042612">
    <property type="term" value="C:MHC class I protein complex"/>
    <property type="evidence" value="ECO:0007669"/>
    <property type="project" value="UniProtKB-KW"/>
</dbReference>
<dbReference type="GO" id="GO:0030670">
    <property type="term" value="C:phagocytic vesicle membrane"/>
    <property type="evidence" value="ECO:0007669"/>
    <property type="project" value="UniProtKB-ARBA"/>
</dbReference>
<dbReference type="GO" id="GO:0055038">
    <property type="term" value="C:recycling endosome membrane"/>
    <property type="evidence" value="ECO:0007669"/>
    <property type="project" value="UniProtKB-ARBA"/>
</dbReference>
<dbReference type="GO" id="GO:0042605">
    <property type="term" value="F:peptide antigen binding"/>
    <property type="evidence" value="ECO:0000318"/>
    <property type="project" value="GO_Central"/>
</dbReference>
<dbReference type="GO" id="GO:0005102">
    <property type="term" value="F:signaling receptor binding"/>
    <property type="evidence" value="ECO:0000318"/>
    <property type="project" value="GO_Central"/>
</dbReference>
<dbReference type="GO" id="GO:0002486">
    <property type="term" value="P:antigen processing and presentation of endogenous peptide antigen via MHC class I via ER pathway, TAP-independent"/>
    <property type="evidence" value="ECO:0000318"/>
    <property type="project" value="GO_Central"/>
</dbReference>
<dbReference type="GO" id="GO:0002476">
    <property type="term" value="P:antigen processing and presentation of endogenous peptide antigen via MHC class Ib"/>
    <property type="evidence" value="ECO:0000318"/>
    <property type="project" value="GO_Central"/>
</dbReference>
<dbReference type="GO" id="GO:0006955">
    <property type="term" value="P:immune response"/>
    <property type="evidence" value="ECO:0000318"/>
    <property type="project" value="GO_Central"/>
</dbReference>
<dbReference type="GO" id="GO:0001916">
    <property type="term" value="P:positive regulation of T cell mediated cytotoxicity"/>
    <property type="evidence" value="ECO:0000318"/>
    <property type="project" value="GO_Central"/>
</dbReference>
<dbReference type="FunFam" id="2.60.40.10:FF:000014">
    <property type="entry name" value="H-2 class I histocompatibility antigen, alpha chain"/>
    <property type="match status" value="1"/>
</dbReference>
<dbReference type="FunFam" id="3.30.500.10:FF:000001">
    <property type="entry name" value="H-2 class I histocompatibility antigen, alpha chain"/>
    <property type="match status" value="1"/>
</dbReference>
<dbReference type="Gene3D" id="2.60.40.10">
    <property type="entry name" value="Immunoglobulins"/>
    <property type="match status" value="1"/>
</dbReference>
<dbReference type="Gene3D" id="3.30.500.10">
    <property type="entry name" value="MHC class I-like antigen recognition-like"/>
    <property type="match status" value="1"/>
</dbReference>
<dbReference type="InterPro" id="IPR007110">
    <property type="entry name" value="Ig-like_dom"/>
</dbReference>
<dbReference type="InterPro" id="IPR036179">
    <property type="entry name" value="Ig-like_dom_sf"/>
</dbReference>
<dbReference type="InterPro" id="IPR013783">
    <property type="entry name" value="Ig-like_fold"/>
</dbReference>
<dbReference type="InterPro" id="IPR003006">
    <property type="entry name" value="Ig/MHC_CS"/>
</dbReference>
<dbReference type="InterPro" id="IPR003597">
    <property type="entry name" value="Ig_C1-set"/>
</dbReference>
<dbReference type="InterPro" id="IPR050208">
    <property type="entry name" value="MHC_class-I_related"/>
</dbReference>
<dbReference type="InterPro" id="IPR011161">
    <property type="entry name" value="MHC_I-like_Ag-recog"/>
</dbReference>
<dbReference type="InterPro" id="IPR037055">
    <property type="entry name" value="MHC_I-like_Ag-recog_sf"/>
</dbReference>
<dbReference type="InterPro" id="IPR011162">
    <property type="entry name" value="MHC_I/II-like_Ag-recog"/>
</dbReference>
<dbReference type="InterPro" id="IPR001039">
    <property type="entry name" value="MHC_I_a_a1/a2"/>
</dbReference>
<dbReference type="InterPro" id="IPR010579">
    <property type="entry name" value="MHC_I_a_C"/>
</dbReference>
<dbReference type="PANTHER" id="PTHR16675:SF229">
    <property type="entry name" value="HLA CLASS I HISTOCOMPATIBILITY ANTIGEN, A ALPHA CHAIN"/>
    <property type="match status" value="1"/>
</dbReference>
<dbReference type="PANTHER" id="PTHR16675">
    <property type="entry name" value="MHC CLASS I-RELATED"/>
    <property type="match status" value="1"/>
</dbReference>
<dbReference type="Pfam" id="PF07654">
    <property type="entry name" value="C1-set"/>
    <property type="match status" value="1"/>
</dbReference>
<dbReference type="Pfam" id="PF00129">
    <property type="entry name" value="MHC_I"/>
    <property type="match status" value="1"/>
</dbReference>
<dbReference type="Pfam" id="PF06623">
    <property type="entry name" value="MHC_I_C"/>
    <property type="match status" value="1"/>
</dbReference>
<dbReference type="PRINTS" id="PR01638">
    <property type="entry name" value="MHCCLASSI"/>
</dbReference>
<dbReference type="SMART" id="SM00407">
    <property type="entry name" value="IGc1"/>
    <property type="match status" value="1"/>
</dbReference>
<dbReference type="SUPFAM" id="SSF48726">
    <property type="entry name" value="Immunoglobulin"/>
    <property type="match status" value="1"/>
</dbReference>
<dbReference type="SUPFAM" id="SSF54452">
    <property type="entry name" value="MHC antigen-recognition domain"/>
    <property type="match status" value="1"/>
</dbReference>
<dbReference type="PROSITE" id="PS50835">
    <property type="entry name" value="IG_LIKE"/>
    <property type="match status" value="1"/>
</dbReference>
<dbReference type="PROSITE" id="PS00290">
    <property type="entry name" value="IG_MHC"/>
    <property type="match status" value="1"/>
</dbReference>
<accession>P30377</accession>
<protein>
    <recommendedName>
        <fullName>Class I histocompatibility antigen, Gogo-A*0401 alpha chain</fullName>
    </recommendedName>
</protein>
<sequence length="365" mass="40934">MAVMAPRTLVLLLSGALALTQTWAGSHSMRYFYTSVSRPGRGEPRFIAVGYVDDTQFVRFDSDAASQRMEPRAPWIEQEEPEYWDGETRNMKARSQTDRVDLGTLRGYYNQSEDGSHTIQRMYGCDVGSDGRFLRGYQQDAYDGKDYIALNEDLRSWTAADMAAQITQRKWEAAHEAEQLRAYLEGTCVEWLRRYLENGKETLQLTDAPKTHMTHHPVSDHEAILRCWALSFYPAEITLTWQRDGEDQTQDTELVETRPAGDGTFQKWAAVVVPSGQEQRYTCHVQHEGLPKPLTLRWEPSSQPTIPIVGIIAGLVLFGAVIAGAVVAAVRWRRKSSDRKGGSYSQAASSDSAQGSDVSLTACKV</sequence>
<keyword id="KW-1015">Disulfide bond</keyword>
<keyword id="KW-0325">Glycoprotein</keyword>
<keyword id="KW-0391">Immunity</keyword>
<keyword id="KW-0472">Membrane</keyword>
<keyword id="KW-0490">MHC I</keyword>
<keyword id="KW-0597">Phosphoprotein</keyword>
<keyword id="KW-1185">Reference proteome</keyword>
<keyword id="KW-0732">Signal</keyword>
<keyword id="KW-0812">Transmembrane</keyword>
<keyword id="KW-1133">Transmembrane helix</keyword>
<evidence type="ECO:0000250" key="1"/>
<evidence type="ECO:0000250" key="2">
    <source>
        <dbReference type="UniProtKB" id="P04439"/>
    </source>
</evidence>
<evidence type="ECO:0000250" key="3">
    <source>
        <dbReference type="UniProtKB" id="P18462"/>
    </source>
</evidence>
<evidence type="ECO:0000255" key="4"/>
<evidence type="ECO:0000255" key="5">
    <source>
        <dbReference type="PROSITE-ProRule" id="PRU00114"/>
    </source>
</evidence>
<evidence type="ECO:0000256" key="6">
    <source>
        <dbReference type="SAM" id="MobiDB-lite"/>
    </source>
</evidence>
<evidence type="ECO:0000305" key="7"/>
<comment type="function">
    <text>Involved in the presentation of foreign antigens to the immune system.</text>
</comment>
<comment type="subunit">
    <text>Heterodimer of an alpha chain and a beta chain (beta-2-microglobulin).</text>
</comment>
<comment type="subcellular location">
    <subcellularLocation>
        <location>Membrane</location>
        <topology>Single-pass type I membrane protein</topology>
    </subcellularLocation>
</comment>
<comment type="similarity">
    <text evidence="7">Belongs to the MHC class I family.</text>
</comment>
<reference key="1">
    <citation type="journal article" date="1991" name="J. Exp. Med.">
        <title>Gorilla class I major histocompatibility complex alleles: comparison to human and chimpanzee class I.</title>
        <authorList>
            <person name="Lawlor D.A."/>
            <person name="Warren E."/>
            <person name="Taylor P."/>
            <person name="Parham P."/>
        </authorList>
    </citation>
    <scope>NUCLEOTIDE SEQUENCE [MRNA]</scope>
</reference>
<feature type="signal peptide" evidence="1">
    <location>
        <begin position="1"/>
        <end position="24"/>
    </location>
</feature>
<feature type="chain" id="PRO_0000018899" description="Class I histocompatibility antigen, Gogo-A*0401 alpha chain">
    <location>
        <begin position="25"/>
        <end position="365"/>
    </location>
</feature>
<feature type="topological domain" description="Extracellular" evidence="4">
    <location>
        <begin position="25"/>
        <end position="308"/>
    </location>
</feature>
<feature type="transmembrane region" description="Helical" evidence="4">
    <location>
        <begin position="309"/>
        <end position="332"/>
    </location>
</feature>
<feature type="topological domain" description="Cytoplasmic" evidence="4">
    <location>
        <begin position="333"/>
        <end position="365"/>
    </location>
</feature>
<feature type="domain" description="Ig-like C1-type">
    <location>
        <begin position="209"/>
        <end position="295"/>
    </location>
</feature>
<feature type="region of interest" description="Alpha-1">
    <location>
        <begin position="25"/>
        <end position="114"/>
    </location>
</feature>
<feature type="region of interest" description="Alpha-2">
    <location>
        <begin position="115"/>
        <end position="206"/>
    </location>
</feature>
<feature type="region of interest" description="Alpha-3">
    <location>
        <begin position="207"/>
        <end position="298"/>
    </location>
</feature>
<feature type="region of interest" description="Connecting peptide">
    <location>
        <begin position="299"/>
        <end position="308"/>
    </location>
</feature>
<feature type="region of interest" description="Disordered" evidence="6">
    <location>
        <begin position="338"/>
        <end position="365"/>
    </location>
</feature>
<feature type="compositionally biased region" description="Low complexity" evidence="6">
    <location>
        <begin position="342"/>
        <end position="359"/>
    </location>
</feature>
<feature type="modified residue" description="Phosphoserine" evidence="3">
    <location>
        <position position="343"/>
    </location>
</feature>
<feature type="modified residue" description="Phosphotyrosine" evidence="3">
    <location>
        <position position="344"/>
    </location>
</feature>
<feature type="modified residue" description="Phosphoserine" evidence="3">
    <location>
        <position position="345"/>
    </location>
</feature>
<feature type="modified residue" description="Phosphoserine" evidence="3">
    <location>
        <position position="349"/>
    </location>
</feature>
<feature type="modified residue" description="Phosphoserine" evidence="2">
    <location>
        <position position="350"/>
    </location>
</feature>
<feature type="modified residue" description="Phosphoserine" evidence="2">
    <location>
        <position position="352"/>
    </location>
</feature>
<feature type="modified residue" description="Phosphoserine" evidence="2">
    <location>
        <position position="356"/>
    </location>
</feature>
<feature type="modified residue" description="Phosphoserine" evidence="2">
    <location>
        <position position="359"/>
    </location>
</feature>
<feature type="glycosylation site" description="N-linked (GlcNAc...) asparagine" evidence="1">
    <location>
        <position position="110"/>
    </location>
</feature>
<feature type="disulfide bond" evidence="5">
    <location>
        <begin position="125"/>
        <end position="188"/>
    </location>
</feature>
<feature type="disulfide bond" evidence="5">
    <location>
        <begin position="227"/>
        <end position="283"/>
    </location>
</feature>
<name>1A03_GORGO</name>
<organism>
    <name type="scientific">Gorilla gorilla gorilla</name>
    <name type="common">Western lowland gorilla</name>
    <dbReference type="NCBI Taxonomy" id="9595"/>
    <lineage>
        <taxon>Eukaryota</taxon>
        <taxon>Metazoa</taxon>
        <taxon>Chordata</taxon>
        <taxon>Craniata</taxon>
        <taxon>Vertebrata</taxon>
        <taxon>Euteleostomi</taxon>
        <taxon>Mammalia</taxon>
        <taxon>Eutheria</taxon>
        <taxon>Euarchontoglires</taxon>
        <taxon>Primates</taxon>
        <taxon>Haplorrhini</taxon>
        <taxon>Catarrhini</taxon>
        <taxon>Hominidae</taxon>
        <taxon>Gorilla</taxon>
    </lineage>
</organism>